<organism>
    <name type="scientific">Sus scrofa</name>
    <name type="common">Pig</name>
    <dbReference type="NCBI Taxonomy" id="9823"/>
    <lineage>
        <taxon>Eukaryota</taxon>
        <taxon>Metazoa</taxon>
        <taxon>Chordata</taxon>
        <taxon>Craniata</taxon>
        <taxon>Vertebrata</taxon>
        <taxon>Euteleostomi</taxon>
        <taxon>Mammalia</taxon>
        <taxon>Eutheria</taxon>
        <taxon>Laurasiatheria</taxon>
        <taxon>Artiodactyla</taxon>
        <taxon>Suina</taxon>
        <taxon>Suidae</taxon>
        <taxon>Sus</taxon>
    </lineage>
</organism>
<sequence>MGTSAVILEICLLLSQVLTTVSSTTQTESTTEDRTQITETAFWETQTINSVSESDLPGTHASSFHTEEPLTTIAAEGTEWDLALRLVNGGDRCQGRVEILYQGSWGTVCDDSWDTNDANVVCRQLGCGWAVSAPGSARFGQGLGPILLDDLRCSGHETYLWSCPHSGWKTHNCGHQEDAGVICSGAQRSSTVIPDWWYTTTRSQTAHIRSTIPAWWHPTTTTAARTEWDLALRLVNGGDRCQGRVEVLYQGSWGTVCDDSWDTNDANVVCRQLGCGWAVSAPGSARFGQGSGPILLDDLRCSGHETYLWSCPHSGWNTHNCGHHEDAGVICSDAQRSSTVIPDWWYTTTPSQTAHIRSTIPAWWHPTTTTAARTEWDLALRLVNGGDRCQGRVEVLYQGSWGTVCDDSWDTNDANVVCRQLGCGWAVSAPGSARFGQGSGPILLDDLRCSGHETYLWSCPHSGWNTHNCGHHEDAGVICSDAQRSSTVIPDWWYTTTPSQTWWHPTTTTAASPSSPCGGFLTSASGTFSSPSYPGLYPNNANCVWEIEVNSGYRINLGFNNLQLEVHINCIYDYIEIFDESPGSNTSLGKICNHTSQIFTSSYNRMTVRFRSDGSVQKPGFSAWYNSFPRDASLRLVNSNSSYPSCAGRVEIYQGGRWGTVCDDGWDIQDAQVVCRQLGCGNAVSAPGNAYFGPGSGPITLDDVACSGTESTLWQCRNRGWFSHNCGHSEDAGVICSVPAFTTTPPATNYSCGGFLSQAAGGFNSPFYPGNYPNNANCVWDIEVQNNYRVTVVFRDVQLESGCNFDYIEVFDGPYRSSPLLARVCNGASGSFTSSSNFMSIRFISDVSVTRAGFRANYYSSPSSGSTRLHCLQNHMQASVSTSYLQSLGYSARDLVIPGWEWSYQCQPQITSTQVTFTIPYSSCGTIQRVDNDTITYSNSLRAAVSSGIIKRKKDLNMYVSCRMLQNTWVNTVYIANDTLEVQNVQYGNFDVNISFFTSSSFLYPVRSSPYYVDLNQNLYLQAELLHANASLALFVDTCVASPYPNDFTTLTYDLIRSGCVKDETYQSYSQPSPRIVRFKFSSFHFLSRFPSVYLQCKMVVCRAFDSSSRCRRGCVVRSKRDVGSYQEKVDVVLGPIQLQTLHAEKRSLDQPAVDLEEKASAQGSYDGAAISAGIFLVVVLAVAAFTLGRRGRAADGQPLISKT</sequence>
<feature type="signal peptide" evidence="2">
    <location>
        <begin position="1"/>
        <end position="19"/>
    </location>
</feature>
<feature type="chain" id="PRO_0000045390" description="Scavenger receptor cysteine-rich domain-containing protein DMBT1">
    <location>
        <begin position="20"/>
        <end position="1204"/>
    </location>
</feature>
<feature type="transmembrane region" description="Helical" evidence="2">
    <location>
        <begin position="1168"/>
        <end position="1188"/>
    </location>
</feature>
<feature type="domain" description="SRCR 1" evidence="4">
    <location>
        <begin position="84"/>
        <end position="184"/>
    </location>
</feature>
<feature type="domain" description="SRCR 2" evidence="4">
    <location>
        <begin position="232"/>
        <end position="332"/>
    </location>
</feature>
<feature type="domain" description="SRCR 3" evidence="4">
    <location>
        <begin position="380"/>
        <end position="480"/>
    </location>
</feature>
<feature type="domain" description="CUB 1" evidence="3">
    <location>
        <begin position="517"/>
        <end position="628"/>
    </location>
</feature>
<feature type="domain" description="SRCR 4" evidence="4">
    <location>
        <begin position="634"/>
        <end position="737"/>
    </location>
</feature>
<feature type="domain" description="CUB 2" evidence="3">
    <location>
        <begin position="752"/>
        <end position="861"/>
    </location>
</feature>
<feature type="domain" description="ZP" evidence="5">
    <location>
        <begin position="870"/>
        <end position="1118"/>
    </location>
</feature>
<feature type="glycosylation site" description="N-linked (GlcNAc...) asparagine" evidence="2">
    <location>
        <position position="585"/>
    </location>
</feature>
<feature type="glycosylation site" description="N-linked (GlcNAc...) asparagine" evidence="2">
    <location>
        <position position="593"/>
    </location>
</feature>
<feature type="glycosylation site" description="N-linked (GlcNAc...) asparagine" evidence="2">
    <location>
        <position position="640"/>
    </location>
</feature>
<feature type="glycosylation site" description="N-linked (GlcNAc...) asparagine" evidence="2">
    <location>
        <position position="749"/>
    </location>
</feature>
<feature type="glycosylation site" description="N-linked (GlcNAc...) asparagine" evidence="2">
    <location>
        <position position="932"/>
    </location>
</feature>
<feature type="glycosylation site" description="N-linked (GlcNAc...) asparagine" evidence="2">
    <location>
        <position position="977"/>
    </location>
</feature>
<feature type="glycosylation site" description="N-linked (GlcNAc...) asparagine" evidence="2">
    <location>
        <position position="993"/>
    </location>
</feature>
<feature type="glycosylation site" description="N-linked (GlcNAc...) asparagine" evidence="2">
    <location>
        <position position="1029"/>
    </location>
</feature>
<feature type="disulfide bond" evidence="1">
    <location>
        <begin position="109"/>
        <end position="173"/>
    </location>
</feature>
<feature type="disulfide bond" evidence="1">
    <location>
        <begin position="122"/>
        <end position="183"/>
    </location>
</feature>
<feature type="disulfide bond" evidence="1">
    <location>
        <begin position="153"/>
        <end position="163"/>
    </location>
</feature>
<feature type="disulfide bond" evidence="1">
    <location>
        <begin position="257"/>
        <end position="321"/>
    </location>
</feature>
<feature type="disulfide bond" evidence="1">
    <location>
        <begin position="270"/>
        <end position="331"/>
    </location>
</feature>
<feature type="disulfide bond" evidence="1">
    <location>
        <begin position="301"/>
        <end position="311"/>
    </location>
</feature>
<feature type="disulfide bond" evidence="1">
    <location>
        <begin position="405"/>
        <end position="469"/>
    </location>
</feature>
<feature type="disulfide bond" evidence="1">
    <location>
        <begin position="418"/>
        <end position="479"/>
    </location>
</feature>
<feature type="disulfide bond" evidence="1">
    <location>
        <begin position="449"/>
        <end position="459"/>
    </location>
</feature>
<feature type="disulfide bond" evidence="1">
    <location>
        <begin position="517"/>
        <end position="543"/>
    </location>
</feature>
<feature type="disulfide bond" evidence="1">
    <location>
        <begin position="570"/>
        <end position="592"/>
    </location>
</feature>
<feature type="disulfide bond" evidence="1">
    <location>
        <begin position="662"/>
        <end position="726"/>
    </location>
</feature>
<feature type="disulfide bond" evidence="1">
    <location>
        <begin position="675"/>
        <end position="736"/>
    </location>
</feature>
<feature type="disulfide bond" evidence="1">
    <location>
        <begin position="706"/>
        <end position="716"/>
    </location>
</feature>
<feature type="disulfide bond" evidence="1">
    <location>
        <begin position="752"/>
        <end position="778"/>
    </location>
</feature>
<feature type="disulfide bond" evidence="1">
    <location>
        <begin position="803"/>
        <end position="825"/>
    </location>
</feature>
<feature type="disulfide bond" evidence="1">
    <location>
        <begin position="1039"/>
        <end position="1097"/>
    </location>
</feature>
<feature type="splice variant" id="VSP_034657" description="In isoform 2." evidence="6">
    <original>T</original>
    <variation>TEWDLALRLVNGGDRCQGRVEILYQGSWGTVCDDSWDTNDANVVCRQLGCGWAISAPGSARFGQGSGPILLDDLRCSGHETYLWSCPHSGWKTHNCGHQEDAGVICSGAQRSSTVIPAWWHPTTTTTATSSFHTEEPLTTIAAEGT</variation>
    <location>
        <position position="78"/>
    </location>
</feature>
<feature type="sequence conflict" description="In Ref. 3; CAB03556." evidence="7" ref="3">
    <original>D</original>
    <variation>G</variation>
    <location>
        <position position="445"/>
    </location>
</feature>
<keyword id="KW-0025">Alternative splicing</keyword>
<keyword id="KW-0968">Cytoplasmic vesicle</keyword>
<keyword id="KW-0217">Developmental protein</keyword>
<keyword id="KW-0221">Differentiation</keyword>
<keyword id="KW-1015">Disulfide bond</keyword>
<keyword id="KW-0325">Glycoprotein</keyword>
<keyword id="KW-0472">Membrane</keyword>
<keyword id="KW-0653">Protein transport</keyword>
<keyword id="KW-1185">Reference proteome</keyword>
<keyword id="KW-0677">Repeat</keyword>
<keyword id="KW-0964">Secreted</keyword>
<keyword id="KW-0732">Signal</keyword>
<keyword id="KW-0812">Transmembrane</keyword>
<keyword id="KW-1133">Transmembrane helix</keyword>
<keyword id="KW-0813">Transport</keyword>
<protein>
    <recommendedName>
        <fullName evidence="7">Scavenger receptor cysteine-rich domain-containing protein DMBT1</fullName>
    </recommendedName>
    <alternativeName>
        <fullName>Deleted in malignant brain tumors 1 protein</fullName>
    </alternativeName>
    <alternativeName>
        <fullName>Hensin</fullName>
    </alternativeName>
</protein>
<accession>Q4A3R3</accession>
<accession>Q0W9P8</accession>
<accession>Q95316</accession>
<dbReference type="EMBL" id="AJ853849">
    <property type="protein sequence ID" value="CAJ27171.1"/>
    <property type="molecule type" value="Genomic_DNA"/>
</dbReference>
<dbReference type="EMBL" id="AM048631">
    <property type="protein sequence ID" value="CAJ14977.1"/>
    <property type="molecule type" value="mRNA"/>
</dbReference>
<dbReference type="EMBL" id="Z81180">
    <property type="protein sequence ID" value="CAB03556.1"/>
    <property type="molecule type" value="mRNA"/>
</dbReference>
<dbReference type="RefSeq" id="NP_001041653.1">
    <property type="nucleotide sequence ID" value="NM_001048188.1"/>
</dbReference>
<dbReference type="SMR" id="Q4A3R3"/>
<dbReference type="FunCoup" id="Q4A3R3">
    <property type="interactions" value="27"/>
</dbReference>
<dbReference type="GlyCosmos" id="Q4A3R3">
    <property type="glycosylation" value="8 sites, No reported glycans"/>
</dbReference>
<dbReference type="GlyGen" id="Q4A3R3">
    <property type="glycosylation" value="8 sites"/>
</dbReference>
<dbReference type="PaxDb" id="9823-ENSSSCP00000020105"/>
<dbReference type="PeptideAtlas" id="Q4A3R3"/>
<dbReference type="GeneID" id="751862"/>
<dbReference type="KEGG" id="ssc:751862"/>
<dbReference type="CTD" id="1755"/>
<dbReference type="eggNOG" id="ENOG502RSDM">
    <property type="taxonomic scope" value="Eukaryota"/>
</dbReference>
<dbReference type="InParanoid" id="Q4A3R3"/>
<dbReference type="OrthoDB" id="536948at2759"/>
<dbReference type="Proteomes" id="UP000008227">
    <property type="component" value="Unplaced"/>
</dbReference>
<dbReference type="Proteomes" id="UP000314985">
    <property type="component" value="Unplaced"/>
</dbReference>
<dbReference type="Proteomes" id="UP000694570">
    <property type="component" value="Unplaced"/>
</dbReference>
<dbReference type="Proteomes" id="UP000694571">
    <property type="component" value="Unplaced"/>
</dbReference>
<dbReference type="Proteomes" id="UP000694720">
    <property type="component" value="Unplaced"/>
</dbReference>
<dbReference type="Proteomes" id="UP000694722">
    <property type="component" value="Unplaced"/>
</dbReference>
<dbReference type="Proteomes" id="UP000694723">
    <property type="component" value="Unplaced"/>
</dbReference>
<dbReference type="Proteomes" id="UP000694724">
    <property type="component" value="Unplaced"/>
</dbReference>
<dbReference type="Proteomes" id="UP000694725">
    <property type="component" value="Unplaced"/>
</dbReference>
<dbReference type="Proteomes" id="UP000694726">
    <property type="component" value="Unplaced"/>
</dbReference>
<dbReference type="Proteomes" id="UP000694727">
    <property type="component" value="Unplaced"/>
</dbReference>
<dbReference type="Proteomes" id="UP000694728">
    <property type="component" value="Unplaced"/>
</dbReference>
<dbReference type="GO" id="GO:0031012">
    <property type="term" value="C:extracellular matrix"/>
    <property type="evidence" value="ECO:0000250"/>
    <property type="project" value="UniProtKB"/>
</dbReference>
<dbReference type="GO" id="GO:0005576">
    <property type="term" value="C:extracellular region"/>
    <property type="evidence" value="ECO:0007669"/>
    <property type="project" value="UniProtKB-SubCell"/>
</dbReference>
<dbReference type="GO" id="GO:0005886">
    <property type="term" value="C:plasma membrane"/>
    <property type="evidence" value="ECO:0000318"/>
    <property type="project" value="GO_Central"/>
</dbReference>
<dbReference type="GO" id="GO:0030658">
    <property type="term" value="C:transport vesicle membrane"/>
    <property type="evidence" value="ECO:0007669"/>
    <property type="project" value="UniProtKB-SubCell"/>
</dbReference>
<dbReference type="GO" id="GO:0042589">
    <property type="term" value="C:zymogen granule membrane"/>
    <property type="evidence" value="ECO:0000250"/>
    <property type="project" value="UniProtKB"/>
</dbReference>
<dbReference type="GO" id="GO:0035375">
    <property type="term" value="F:zymogen binding"/>
    <property type="evidence" value="ECO:0000250"/>
    <property type="project" value="UniProtKB"/>
</dbReference>
<dbReference type="GO" id="GO:0030154">
    <property type="term" value="P:cell differentiation"/>
    <property type="evidence" value="ECO:0007669"/>
    <property type="project" value="UniProtKB-KW"/>
</dbReference>
<dbReference type="GO" id="GO:0050829">
    <property type="term" value="P:defense response to Gram-negative bacterium"/>
    <property type="evidence" value="ECO:0000250"/>
    <property type="project" value="UniProtKB"/>
</dbReference>
<dbReference type="GO" id="GO:0050830">
    <property type="term" value="P:defense response to Gram-positive bacterium"/>
    <property type="evidence" value="ECO:0000250"/>
    <property type="project" value="UniProtKB"/>
</dbReference>
<dbReference type="GO" id="GO:0015031">
    <property type="term" value="P:protein transport"/>
    <property type="evidence" value="ECO:0007669"/>
    <property type="project" value="UniProtKB-KW"/>
</dbReference>
<dbReference type="CDD" id="cd00041">
    <property type="entry name" value="CUB"/>
    <property type="match status" value="2"/>
</dbReference>
<dbReference type="FunFam" id="2.60.40.4100:FF:000005">
    <property type="entry name" value="Deleted in malignant brain tumors 1"/>
    <property type="match status" value="1"/>
</dbReference>
<dbReference type="FunFam" id="3.10.250.10:FF:000003">
    <property type="entry name" value="Deleted in malignant brain tumors 1"/>
    <property type="match status" value="4"/>
</dbReference>
<dbReference type="FunFam" id="2.60.120.290:FF:000004">
    <property type="entry name" value="Metalloendopeptidase"/>
    <property type="match status" value="2"/>
</dbReference>
<dbReference type="Gene3D" id="2.60.120.290">
    <property type="entry name" value="Spermadhesin, CUB domain"/>
    <property type="match status" value="2"/>
</dbReference>
<dbReference type="Gene3D" id="3.10.250.10">
    <property type="entry name" value="SRCR-like domain"/>
    <property type="match status" value="4"/>
</dbReference>
<dbReference type="Gene3D" id="2.60.40.4100">
    <property type="entry name" value="Zona pellucida, ZP-C domain"/>
    <property type="match status" value="1"/>
</dbReference>
<dbReference type="Gene3D" id="2.60.40.3210">
    <property type="entry name" value="Zona pellucida, ZP-N domain"/>
    <property type="match status" value="1"/>
</dbReference>
<dbReference type="InterPro" id="IPR000859">
    <property type="entry name" value="CUB_dom"/>
</dbReference>
<dbReference type="InterPro" id="IPR035914">
    <property type="entry name" value="Sperma_CUB_dom_sf"/>
</dbReference>
<dbReference type="InterPro" id="IPR001190">
    <property type="entry name" value="SRCR"/>
</dbReference>
<dbReference type="InterPro" id="IPR036772">
    <property type="entry name" value="SRCR-like_dom_sf"/>
</dbReference>
<dbReference type="InterPro" id="IPR055355">
    <property type="entry name" value="ZP-C"/>
</dbReference>
<dbReference type="InterPro" id="IPR042235">
    <property type="entry name" value="ZP-C_dom"/>
</dbReference>
<dbReference type="InterPro" id="IPR055356">
    <property type="entry name" value="ZP-N"/>
</dbReference>
<dbReference type="InterPro" id="IPR001507">
    <property type="entry name" value="ZP_dom"/>
</dbReference>
<dbReference type="InterPro" id="IPR017977">
    <property type="entry name" value="ZP_dom_CS"/>
</dbReference>
<dbReference type="PANTHER" id="PTHR48071">
    <property type="entry name" value="SRCR DOMAIN-CONTAINING PROTEIN"/>
    <property type="match status" value="1"/>
</dbReference>
<dbReference type="PANTHER" id="PTHR48071:SF15">
    <property type="entry name" value="SRCR DOMAIN-CONTAINING PROTEIN"/>
    <property type="match status" value="1"/>
</dbReference>
<dbReference type="Pfam" id="PF00431">
    <property type="entry name" value="CUB"/>
    <property type="match status" value="2"/>
</dbReference>
<dbReference type="Pfam" id="PF00530">
    <property type="entry name" value="SRCR"/>
    <property type="match status" value="4"/>
</dbReference>
<dbReference type="Pfam" id="PF00100">
    <property type="entry name" value="Zona_pellucida"/>
    <property type="match status" value="1"/>
</dbReference>
<dbReference type="Pfam" id="PF23344">
    <property type="entry name" value="ZP-N"/>
    <property type="match status" value="1"/>
</dbReference>
<dbReference type="PRINTS" id="PR00258">
    <property type="entry name" value="SPERACTRCPTR"/>
</dbReference>
<dbReference type="SMART" id="SM00042">
    <property type="entry name" value="CUB"/>
    <property type="match status" value="2"/>
</dbReference>
<dbReference type="SMART" id="SM00202">
    <property type="entry name" value="SR"/>
    <property type="match status" value="4"/>
</dbReference>
<dbReference type="SMART" id="SM00241">
    <property type="entry name" value="ZP"/>
    <property type="match status" value="1"/>
</dbReference>
<dbReference type="SUPFAM" id="SSF49854">
    <property type="entry name" value="Spermadhesin, CUB domain"/>
    <property type="match status" value="2"/>
</dbReference>
<dbReference type="SUPFAM" id="SSF56487">
    <property type="entry name" value="SRCR-like"/>
    <property type="match status" value="4"/>
</dbReference>
<dbReference type="PROSITE" id="PS01180">
    <property type="entry name" value="CUB"/>
    <property type="match status" value="2"/>
</dbReference>
<dbReference type="PROSITE" id="PS00420">
    <property type="entry name" value="SRCR_1"/>
    <property type="match status" value="3"/>
</dbReference>
<dbReference type="PROSITE" id="PS50287">
    <property type="entry name" value="SRCR_2"/>
    <property type="match status" value="4"/>
</dbReference>
<dbReference type="PROSITE" id="PS00682">
    <property type="entry name" value="ZP_1"/>
    <property type="match status" value="1"/>
</dbReference>
<dbReference type="PROSITE" id="PS51034">
    <property type="entry name" value="ZP_2"/>
    <property type="match status" value="1"/>
</dbReference>
<comment type="function">
    <text evidence="1">May play roles in mucosal defense system and cellular immune defense. May play a role in liver regeneration. May be an important factor in fate decision and differentiation of transit-amplifying ductular (oval) cells within the hepatic lineage. May function as a binding protein in saliva for the regulation of taste sensation. May play a role as an opsonin receptor for SFTPD and SPAR in macrophage tissues throughout the body, including epithelial cells lining the gastrointestinal tract. Required for terminal differentiation of columnar epithelial cells during early embryogenesis. Displays a broad calcium-dependent binding spectrum against both Gram-positive and Gram-negative bacteria, suggesting a role in defense against bacterial pathogens. Binds to a range of poly-sulfated and poly-phosphorylated ligands which may explain its broad bacterial-binding specificity. Inhibits cytoinvasion of S.enterica. Associates with the actin cytoskeleton and is involved in its remodeling during regulated exocytosis. Interacts with pancreatic zymogens in a pH-dependent manner and may act as a Golgi cargo receptor in the regulated secretory pathway of the pancreatic acinar cell (By similarity).</text>
</comment>
<comment type="subunit">
    <text evidence="1">Interacts with LGALS3. Binds SFTPD and SPAR in a calcium-dependent manner (By similarity).</text>
</comment>
<comment type="subcellular location">
    <subcellularLocation>
        <location evidence="1">Secreted</location>
    </subcellularLocation>
    <subcellularLocation>
        <location evidence="1">Cytoplasmic vesicle</location>
        <location evidence="1">Secretory vesicle membrane</location>
        <topology evidence="1">Single-pass membrane protein</topology>
        <orientation evidence="1">Lumenal side</orientation>
    </subcellularLocation>
    <text evidence="1">Localized to the lumenal aspect of crypt cells in the small intestine. In the colon, seen in the lumenal aspect of surface epithelial cells (By similarity). Formed in the ducts of von Ebner gland and released into the fluid bathing the taste buds contained in the taste papillae (By similarity).</text>
</comment>
<comment type="alternative products">
    <event type="alternative splicing"/>
    <isoform>
        <id>Q4A3R3-1</id>
        <name>1</name>
        <sequence type="displayed"/>
    </isoform>
    <isoform>
        <id>Q4A3R3-2</id>
        <name>2</name>
        <sequence type="described" ref="VSP_034657"/>
    </isoform>
</comment>
<comment type="domain">
    <text evidence="1">The SRCR domains mediate binding to bacteria.</text>
</comment>
<comment type="PTM">
    <text evidence="1">Highly N- and O-glycosylated. The O-glycans are heavily sulfated (By similarity).</text>
</comment>
<comment type="similarity">
    <text evidence="7">Belongs to the DMBT1 family.</text>
</comment>
<evidence type="ECO:0000250" key="1"/>
<evidence type="ECO:0000255" key="2"/>
<evidence type="ECO:0000255" key="3">
    <source>
        <dbReference type="PROSITE-ProRule" id="PRU00059"/>
    </source>
</evidence>
<evidence type="ECO:0000255" key="4">
    <source>
        <dbReference type="PROSITE-ProRule" id="PRU00196"/>
    </source>
</evidence>
<evidence type="ECO:0000255" key="5">
    <source>
        <dbReference type="PROSITE-ProRule" id="PRU00375"/>
    </source>
</evidence>
<evidence type="ECO:0000303" key="6">
    <source>
    </source>
</evidence>
<evidence type="ECO:0000305" key="7"/>
<reference key="1">
    <citation type="journal article" date="2005" name="Gene">
        <title>Evolution of the spermadhesin gene family.</title>
        <authorList>
            <person name="Haase B."/>
            <person name="Schloetterer C."/>
            <person name="Hundrieser M.E."/>
            <person name="Kuiper H."/>
            <person name="Distl O."/>
            <person name="Topfer-Petersen E."/>
            <person name="Leeb T."/>
        </authorList>
    </citation>
    <scope>NUCLEOTIDE SEQUENCE [GENOMIC DNA] (ISOFORM 1)</scope>
</reference>
<reference key="2">
    <citation type="journal article" date="2006" name="Gene">
        <title>Molecular characterization of the porcine deleted in malignant brain tumors 1 gene (DMBT1).</title>
        <authorList>
            <person name="Haase B."/>
            <person name="Humphray S.J."/>
            <person name="Lyer S."/>
            <person name="Renner M."/>
            <person name="Poustka A."/>
            <person name="Mollenhauer J."/>
            <person name="Leeb T."/>
        </authorList>
    </citation>
    <scope>NUCLEOTIDE SEQUENCE [MRNA] (ISOFORM 2)</scope>
</reference>
<reference key="3">
    <citation type="submission" date="1995-07" db="EMBL/GenBank/DDBJ databases">
        <title>Evaluation and characterization of a porcine small intestine cDNA library.</title>
        <authorList>
            <person name="Winteroe A.K."/>
            <person name="Fredholm M."/>
            <person name="Davies W."/>
        </authorList>
    </citation>
    <scope>NUCLEOTIDE SEQUENCE [LARGE SCALE MRNA] OF 355-481 (ISOFORM 1)</scope>
    <source>
        <tissue>Small intestine</tissue>
    </source>
</reference>
<proteinExistence type="evidence at transcript level"/>
<name>DMBT1_PIG</name>
<gene>
    <name type="primary">DMBT1</name>
</gene>